<proteinExistence type="evidence at protein level"/>
<reference key="1">
    <citation type="journal article" date="2000" name="Nature">
        <title>Sequence and analysis of chromosome 3 of the plant Arabidopsis thaliana.</title>
        <authorList>
            <person name="Salanoubat M."/>
            <person name="Lemcke K."/>
            <person name="Rieger M."/>
            <person name="Ansorge W."/>
            <person name="Unseld M."/>
            <person name="Fartmann B."/>
            <person name="Valle G."/>
            <person name="Bloecker H."/>
            <person name="Perez-Alonso M."/>
            <person name="Obermaier B."/>
            <person name="Delseny M."/>
            <person name="Boutry M."/>
            <person name="Grivell L.A."/>
            <person name="Mache R."/>
            <person name="Puigdomenech P."/>
            <person name="De Simone V."/>
            <person name="Choisne N."/>
            <person name="Artiguenave F."/>
            <person name="Robert C."/>
            <person name="Brottier P."/>
            <person name="Wincker P."/>
            <person name="Cattolico L."/>
            <person name="Weissenbach J."/>
            <person name="Saurin W."/>
            <person name="Quetier F."/>
            <person name="Schaefer M."/>
            <person name="Mueller-Auer S."/>
            <person name="Gabel C."/>
            <person name="Fuchs M."/>
            <person name="Benes V."/>
            <person name="Wurmbach E."/>
            <person name="Drzonek H."/>
            <person name="Erfle H."/>
            <person name="Jordan N."/>
            <person name="Bangert S."/>
            <person name="Wiedelmann R."/>
            <person name="Kranz H."/>
            <person name="Voss H."/>
            <person name="Holland R."/>
            <person name="Brandt P."/>
            <person name="Nyakatura G."/>
            <person name="Vezzi A."/>
            <person name="D'Angelo M."/>
            <person name="Pallavicini A."/>
            <person name="Toppo S."/>
            <person name="Simionati B."/>
            <person name="Conrad A."/>
            <person name="Hornischer K."/>
            <person name="Kauer G."/>
            <person name="Loehnert T.-H."/>
            <person name="Nordsiek G."/>
            <person name="Reichelt J."/>
            <person name="Scharfe M."/>
            <person name="Schoen O."/>
            <person name="Bargues M."/>
            <person name="Terol J."/>
            <person name="Climent J."/>
            <person name="Navarro P."/>
            <person name="Collado C."/>
            <person name="Perez-Perez A."/>
            <person name="Ottenwaelder B."/>
            <person name="Duchemin D."/>
            <person name="Cooke R."/>
            <person name="Laudie M."/>
            <person name="Berger-Llauro C."/>
            <person name="Purnelle B."/>
            <person name="Masuy D."/>
            <person name="de Haan M."/>
            <person name="Maarse A.C."/>
            <person name="Alcaraz J.-P."/>
            <person name="Cottet A."/>
            <person name="Casacuberta E."/>
            <person name="Monfort A."/>
            <person name="Argiriou A."/>
            <person name="Flores M."/>
            <person name="Liguori R."/>
            <person name="Vitale D."/>
            <person name="Mannhaupt G."/>
            <person name="Haase D."/>
            <person name="Schoof H."/>
            <person name="Rudd S."/>
            <person name="Zaccaria P."/>
            <person name="Mewes H.-W."/>
            <person name="Mayer K.F.X."/>
            <person name="Kaul S."/>
            <person name="Town C.D."/>
            <person name="Koo H.L."/>
            <person name="Tallon L.J."/>
            <person name="Jenkins J."/>
            <person name="Rooney T."/>
            <person name="Rizzo M."/>
            <person name="Walts A."/>
            <person name="Utterback T."/>
            <person name="Fujii C.Y."/>
            <person name="Shea T.P."/>
            <person name="Creasy T.H."/>
            <person name="Haas B."/>
            <person name="Maiti R."/>
            <person name="Wu D."/>
            <person name="Peterson J."/>
            <person name="Van Aken S."/>
            <person name="Pai G."/>
            <person name="Militscher J."/>
            <person name="Sellers P."/>
            <person name="Gill J.E."/>
            <person name="Feldblyum T.V."/>
            <person name="Preuss D."/>
            <person name="Lin X."/>
            <person name="Nierman W.C."/>
            <person name="Salzberg S.L."/>
            <person name="White O."/>
            <person name="Venter J.C."/>
            <person name="Fraser C.M."/>
            <person name="Kaneko T."/>
            <person name="Nakamura Y."/>
            <person name="Sato S."/>
            <person name="Kato T."/>
            <person name="Asamizu E."/>
            <person name="Sasamoto S."/>
            <person name="Kimura T."/>
            <person name="Idesawa K."/>
            <person name="Kawashima K."/>
            <person name="Kishida Y."/>
            <person name="Kiyokawa C."/>
            <person name="Kohara M."/>
            <person name="Matsumoto M."/>
            <person name="Matsuno A."/>
            <person name="Muraki A."/>
            <person name="Nakayama S."/>
            <person name="Nakazaki N."/>
            <person name="Shinpo S."/>
            <person name="Takeuchi C."/>
            <person name="Wada T."/>
            <person name="Watanabe A."/>
            <person name="Yamada M."/>
            <person name="Yasuda M."/>
            <person name="Tabata S."/>
        </authorList>
    </citation>
    <scope>NUCLEOTIDE SEQUENCE [LARGE SCALE GENOMIC DNA]</scope>
    <source>
        <strain>cv. Columbia</strain>
    </source>
</reference>
<reference key="2">
    <citation type="journal article" date="2017" name="Plant J.">
        <title>Araport11: a complete reannotation of the Arabidopsis thaliana reference genome.</title>
        <authorList>
            <person name="Cheng C.Y."/>
            <person name="Krishnakumar V."/>
            <person name="Chan A.P."/>
            <person name="Thibaud-Nissen F."/>
            <person name="Schobel S."/>
            <person name="Town C.D."/>
        </authorList>
    </citation>
    <scope>GENOME REANNOTATION</scope>
    <source>
        <strain>cv. Columbia</strain>
    </source>
</reference>
<reference key="3">
    <citation type="journal article" date="2003" name="Science">
        <title>Empirical analysis of transcriptional activity in the Arabidopsis genome.</title>
        <authorList>
            <person name="Yamada K."/>
            <person name="Lim J."/>
            <person name="Dale J.M."/>
            <person name="Chen H."/>
            <person name="Shinn P."/>
            <person name="Palm C.J."/>
            <person name="Southwick A.M."/>
            <person name="Wu H.C."/>
            <person name="Kim C.J."/>
            <person name="Nguyen M."/>
            <person name="Pham P.K."/>
            <person name="Cheuk R.F."/>
            <person name="Karlin-Newmann G."/>
            <person name="Liu S.X."/>
            <person name="Lam B."/>
            <person name="Sakano H."/>
            <person name="Wu T."/>
            <person name="Yu G."/>
            <person name="Miranda M."/>
            <person name="Quach H.L."/>
            <person name="Tripp M."/>
            <person name="Chang C.H."/>
            <person name="Lee J.M."/>
            <person name="Toriumi M.J."/>
            <person name="Chan M.M."/>
            <person name="Tang C.C."/>
            <person name="Onodera C.S."/>
            <person name="Deng J.M."/>
            <person name="Akiyama K."/>
            <person name="Ansari Y."/>
            <person name="Arakawa T."/>
            <person name="Banh J."/>
            <person name="Banno F."/>
            <person name="Bowser L."/>
            <person name="Brooks S.Y."/>
            <person name="Carninci P."/>
            <person name="Chao Q."/>
            <person name="Choy N."/>
            <person name="Enju A."/>
            <person name="Goldsmith A.D."/>
            <person name="Gurjal M."/>
            <person name="Hansen N.F."/>
            <person name="Hayashizaki Y."/>
            <person name="Johnson-Hopson C."/>
            <person name="Hsuan V.W."/>
            <person name="Iida K."/>
            <person name="Karnes M."/>
            <person name="Khan S."/>
            <person name="Koesema E."/>
            <person name="Ishida J."/>
            <person name="Jiang P.X."/>
            <person name="Jones T."/>
            <person name="Kawai J."/>
            <person name="Kamiya A."/>
            <person name="Meyers C."/>
            <person name="Nakajima M."/>
            <person name="Narusaka M."/>
            <person name="Seki M."/>
            <person name="Sakurai T."/>
            <person name="Satou M."/>
            <person name="Tamse R."/>
            <person name="Vaysberg M."/>
            <person name="Wallender E.K."/>
            <person name="Wong C."/>
            <person name="Yamamura Y."/>
            <person name="Yuan S."/>
            <person name="Shinozaki K."/>
            <person name="Davis R.W."/>
            <person name="Theologis A."/>
            <person name="Ecker J.R."/>
        </authorList>
    </citation>
    <scope>NUCLEOTIDE SEQUENCE [LARGE SCALE MRNA]</scope>
    <source>
        <strain>cv. Columbia</strain>
    </source>
</reference>
<reference key="4">
    <citation type="journal article" date="2008" name="Plant Physiol.">
        <title>Inactive methyl indole-3-acetic acid ester can be hydrolyzed and activated by several esterases belonging to the AtMES esterase family of Arabidopsis.</title>
        <authorList>
            <person name="Yang Y."/>
            <person name="Xu R."/>
            <person name="Ma C.J."/>
            <person name="Vlot A.C."/>
            <person name="Klessig D.F."/>
            <person name="Pichersky E."/>
        </authorList>
    </citation>
    <scope>GENE FAMILY</scope>
    <scope>FUNCTION</scope>
    <scope>DISRUPTION PHENOTYPE</scope>
    <scope>BIOPHYSICOCHEMICAL PROPERTIES</scope>
    <scope>CATALYTIC ACTIVITY</scope>
    <scope>PATHWAY</scope>
</reference>
<protein>
    <recommendedName>
        <fullName evidence="4">Methylesterase 17</fullName>
        <shortName evidence="4">AtMES17</shortName>
        <ecNumber evidence="3">3.1.1.-</ecNumber>
    </recommendedName>
    <alternativeName>
        <fullName evidence="4">Methyl indole-3-acetic acid esterase</fullName>
    </alternativeName>
</protein>
<name>MES17_ARATH</name>
<evidence type="ECO:0000250" key="1">
    <source>
        <dbReference type="UniProtKB" id="Q6RYA0"/>
    </source>
</evidence>
<evidence type="ECO:0000255" key="2"/>
<evidence type="ECO:0000269" key="3">
    <source>
    </source>
</evidence>
<evidence type="ECO:0000303" key="4">
    <source>
    </source>
</evidence>
<evidence type="ECO:0000305" key="5"/>
<evidence type="ECO:0000312" key="6">
    <source>
        <dbReference type="Araport" id="AT3G10870"/>
    </source>
</evidence>
<evidence type="ECO:0000312" key="7">
    <source>
        <dbReference type="EMBL" id="AAF19562.1"/>
    </source>
</evidence>
<keyword id="KW-0378">Hydrolase</keyword>
<keyword id="KW-1185">Reference proteome</keyword>
<accession>Q9SG92</accession>
<dbReference type="EC" id="3.1.1.-" evidence="3"/>
<dbReference type="EMBL" id="AC011708">
    <property type="protein sequence ID" value="AAF19562.1"/>
    <property type="molecule type" value="Genomic_DNA"/>
</dbReference>
<dbReference type="EMBL" id="CP002686">
    <property type="protein sequence ID" value="AEE74965.1"/>
    <property type="molecule type" value="Genomic_DNA"/>
</dbReference>
<dbReference type="EMBL" id="AY063992">
    <property type="protein sequence ID" value="AAL36348.1"/>
    <property type="molecule type" value="mRNA"/>
</dbReference>
<dbReference type="EMBL" id="AY096692">
    <property type="protein sequence ID" value="AAM20326.1"/>
    <property type="molecule type" value="mRNA"/>
</dbReference>
<dbReference type="RefSeq" id="NP_187698.1">
    <property type="nucleotide sequence ID" value="NM_111924.3"/>
</dbReference>
<dbReference type="SMR" id="Q9SG92"/>
<dbReference type="BioGRID" id="5591">
    <property type="interactions" value="2"/>
</dbReference>
<dbReference type="IntAct" id="Q9SG92">
    <property type="interactions" value="2"/>
</dbReference>
<dbReference type="STRING" id="3702.Q9SG92"/>
<dbReference type="ESTHER" id="arath-MES17">
    <property type="family name" value="Hydroxynitrile_lyase"/>
</dbReference>
<dbReference type="PaxDb" id="3702-AT3G10870.1"/>
<dbReference type="ProteomicsDB" id="232246"/>
<dbReference type="EnsemblPlants" id="AT3G10870.1">
    <property type="protein sequence ID" value="AT3G10870.1"/>
    <property type="gene ID" value="AT3G10870"/>
</dbReference>
<dbReference type="GeneID" id="820257"/>
<dbReference type="Gramene" id="AT3G10870.1">
    <property type="protein sequence ID" value="AT3G10870.1"/>
    <property type="gene ID" value="AT3G10870"/>
</dbReference>
<dbReference type="KEGG" id="ath:AT3G10870"/>
<dbReference type="Araport" id="AT3G10870"/>
<dbReference type="TAIR" id="AT3G10870">
    <property type="gene designation" value="MES17"/>
</dbReference>
<dbReference type="eggNOG" id="ENOG502RZ4X">
    <property type="taxonomic scope" value="Eukaryota"/>
</dbReference>
<dbReference type="HOGENOM" id="CLU_046066_0_2_1"/>
<dbReference type="InParanoid" id="Q9SG92"/>
<dbReference type="OMA" id="SGGAWCW"/>
<dbReference type="PhylomeDB" id="Q9SG92"/>
<dbReference type="BioCyc" id="ARA:AT3G10870-MONOMER"/>
<dbReference type="BRENDA" id="3.1.1.1">
    <property type="organism ID" value="399"/>
</dbReference>
<dbReference type="SABIO-RK" id="Q9SG92"/>
<dbReference type="PRO" id="PR:Q9SG92"/>
<dbReference type="Proteomes" id="UP000006548">
    <property type="component" value="Chromosome 3"/>
</dbReference>
<dbReference type="ExpressionAtlas" id="Q9SG92">
    <property type="expression patterns" value="baseline and differential"/>
</dbReference>
<dbReference type="GO" id="GO:0016788">
    <property type="term" value="F:hydrolase activity, acting on ester bonds"/>
    <property type="evidence" value="ECO:0000314"/>
    <property type="project" value="TAIR"/>
</dbReference>
<dbReference type="GO" id="GO:0080030">
    <property type="term" value="F:methyl indole-3-acetate esterase activity"/>
    <property type="evidence" value="ECO:0000314"/>
    <property type="project" value="TAIR"/>
</dbReference>
<dbReference type="GO" id="GO:0033473">
    <property type="term" value="P:indoleacetic acid conjugate metabolic process"/>
    <property type="evidence" value="ECO:0000314"/>
    <property type="project" value="TAIR"/>
</dbReference>
<dbReference type="GO" id="GO:0048367">
    <property type="term" value="P:shoot system development"/>
    <property type="evidence" value="ECO:0000315"/>
    <property type="project" value="TAIR"/>
</dbReference>
<dbReference type="FunFam" id="3.40.50.1820:FF:000025">
    <property type="entry name" value="putative methylesterase 11, chloroplastic"/>
    <property type="match status" value="1"/>
</dbReference>
<dbReference type="Gene3D" id="3.40.50.1820">
    <property type="entry name" value="alpha/beta hydrolase"/>
    <property type="match status" value="1"/>
</dbReference>
<dbReference type="InterPro" id="IPR000073">
    <property type="entry name" value="AB_hydrolase_1"/>
</dbReference>
<dbReference type="InterPro" id="IPR029058">
    <property type="entry name" value="AB_hydrolase_fold"/>
</dbReference>
<dbReference type="InterPro" id="IPR045889">
    <property type="entry name" value="MES/HNL"/>
</dbReference>
<dbReference type="PANTHER" id="PTHR10992:SF1032">
    <property type="entry name" value="METHYLESTERASE 17"/>
    <property type="match status" value="1"/>
</dbReference>
<dbReference type="PANTHER" id="PTHR10992">
    <property type="entry name" value="METHYLESTERASE FAMILY MEMBER"/>
    <property type="match status" value="1"/>
</dbReference>
<dbReference type="Pfam" id="PF12697">
    <property type="entry name" value="Abhydrolase_6"/>
    <property type="match status" value="1"/>
</dbReference>
<dbReference type="SUPFAM" id="SSF53474">
    <property type="entry name" value="alpha/beta-Hydrolases"/>
    <property type="match status" value="1"/>
</dbReference>
<comment type="function">
    <text evidence="3">Methylesterase that efficiently and specifically hydrolyzes methyl indole-3-acetic acid (MeIAA) to IAA (auxin). MeIAA is believed to be an inactive form of auxin that needs to be demethylated to exert a biological effect.</text>
</comment>
<comment type="catalytic activity">
    <reaction evidence="3">
        <text>methyl (indol-3-yl)acetate + H2O = (indol-3-yl)acetate + methanol + H(+)</text>
        <dbReference type="Rhea" id="RHEA:32919"/>
        <dbReference type="ChEBI" id="CHEBI:15377"/>
        <dbReference type="ChEBI" id="CHEBI:15378"/>
        <dbReference type="ChEBI" id="CHEBI:17790"/>
        <dbReference type="ChEBI" id="CHEBI:30854"/>
        <dbReference type="ChEBI" id="CHEBI:72782"/>
    </reaction>
    <physiologicalReaction direction="left-to-right" evidence="3">
        <dbReference type="Rhea" id="RHEA:32920"/>
    </physiologicalReaction>
</comment>
<comment type="biophysicochemical properties">
    <kinetics>
        <KM evidence="3">13 uM for methyl indole-3-acetic acid (MeIAA) (at pH 7.5)</KM>
        <text evidence="3">kcat is 0.18 sec(-1) with methyl indole-3-acetic acid as substrate.</text>
    </kinetics>
</comment>
<comment type="pathway">
    <text evidence="3">Plant hormone biosynthesis.</text>
</comment>
<comment type="interaction">
    <interactant intactId="EBI-25529686">
        <id>Q9SG92</id>
    </interactant>
    <interactant intactId="EBI-963597">
        <id>Q9MAA7</id>
        <label>GID1A</label>
    </interactant>
    <organismsDiffer>false</organismsDiffer>
    <experiments>3</experiments>
</comment>
<comment type="interaction">
    <interactant intactId="EBI-25529686">
        <id>Q9SG92</id>
    </interactant>
    <interactant intactId="EBI-963686">
        <id>Q9LYC1</id>
        <label>GID1B</label>
    </interactant>
    <organismsDiffer>false</organismsDiffer>
    <experiments>3</experiments>
</comment>
<comment type="tissue specificity">
    <text>Expressed in several tissues of seedlings and adult plants, with a higher relative level of expression in the seedling shoot apex and the adult stem.</text>
</comment>
<comment type="disruption phenotype">
    <text evidence="3">Longer hypocotyls when grown in presence of exogenous MeIAA.</text>
</comment>
<comment type="similarity">
    <text evidence="5">Belongs to the AB hydrolase superfamily. Methylesterase family.</text>
</comment>
<organism>
    <name type="scientific">Arabidopsis thaliana</name>
    <name type="common">Mouse-ear cress</name>
    <dbReference type="NCBI Taxonomy" id="3702"/>
    <lineage>
        <taxon>Eukaryota</taxon>
        <taxon>Viridiplantae</taxon>
        <taxon>Streptophyta</taxon>
        <taxon>Embryophyta</taxon>
        <taxon>Tracheophyta</taxon>
        <taxon>Spermatophyta</taxon>
        <taxon>Magnoliopsida</taxon>
        <taxon>eudicotyledons</taxon>
        <taxon>Gunneridae</taxon>
        <taxon>Pentapetalae</taxon>
        <taxon>rosids</taxon>
        <taxon>malvids</taxon>
        <taxon>Brassicales</taxon>
        <taxon>Brassicaceae</taxon>
        <taxon>Camelineae</taxon>
        <taxon>Arabidopsis</taxon>
    </lineage>
</organism>
<feature type="chain" id="PRO_0000418189" description="Methylesterase 17">
    <location>
        <begin position="1"/>
        <end position="276"/>
    </location>
</feature>
<feature type="domain" description="AB hydrolase-1" evidence="2">
    <location>
        <begin position="19"/>
        <end position="138"/>
    </location>
</feature>
<feature type="active site" description="Acyl-ester intermediate" evidence="1">
    <location>
        <position position="95"/>
    </location>
</feature>
<feature type="active site" description="Charge relay system" evidence="1">
    <location>
        <position position="225"/>
    </location>
</feature>
<feature type="active site" description="Charge relay system" evidence="1">
    <location>
        <position position="252"/>
    </location>
</feature>
<gene>
    <name evidence="4" type="primary">MES17</name>
    <name evidence="6" type="ordered locus">At3g10870</name>
    <name evidence="7" type="ORF">T7M13.5</name>
</gene>
<sequence length="276" mass="30868">MAEENQEETLELKPSRKPPHFVLIHGMSLGSWCWYKIKCLMEVSGFTVTCIDLKSSGIDSSSVDSLTTFDQYNQPLIDFLSSFPEQEQVILVGHSAGGLSLTSAIQRFPKKICLAVFIGASMLKNGLQTDEDMKDGVPDLSEHGDVYELGFGLGPENPPTSAIIKPEYRRKLLYHMSPQQECSLAALMMRPAPILALTTAKLEEEEKEKGQEEQVPRVYIKTLLDRVMKPEQQDAMIRRWPPSQVYELESDHSPFFSNPFVLFGLLIKAAVSVGSI</sequence>